<dbReference type="EMBL" id="AF207991">
    <property type="protein sequence ID" value="AAF20989.1"/>
    <property type="molecule type" value="mRNA"/>
</dbReference>
<dbReference type="EMBL" id="AY519561">
    <property type="protein sequence ID" value="AAS10031.1"/>
    <property type="molecule type" value="mRNA"/>
</dbReference>
<dbReference type="EMBL" id="AC007887">
    <property type="protein sequence ID" value="AAF79367.1"/>
    <property type="status" value="ALT_SEQ"/>
    <property type="molecule type" value="Genomic_DNA"/>
</dbReference>
<dbReference type="EMBL" id="CP002684">
    <property type="protein sequence ID" value="AEE31803.1"/>
    <property type="molecule type" value="Genomic_DNA"/>
</dbReference>
<dbReference type="PIR" id="D86476">
    <property type="entry name" value="D86476"/>
</dbReference>
<dbReference type="RefSeq" id="NP_849749.1">
    <property type="nucleotide sequence ID" value="NM_179418.2"/>
</dbReference>
<dbReference type="SMR" id="Q9SDS8"/>
<dbReference type="IntAct" id="Q9SDS8">
    <property type="interactions" value="7"/>
</dbReference>
<dbReference type="STRING" id="3702.Q9SDS8"/>
<dbReference type="PaxDb" id="3702-AT1G35515.1"/>
<dbReference type="EnsemblPlants" id="AT1G35515.1">
    <property type="protein sequence ID" value="AT1G35515.1"/>
    <property type="gene ID" value="AT1G35515"/>
</dbReference>
<dbReference type="GeneID" id="840446"/>
<dbReference type="Gramene" id="AT1G35515.1">
    <property type="protein sequence ID" value="AT1G35515.1"/>
    <property type="gene ID" value="AT1G35515"/>
</dbReference>
<dbReference type="KEGG" id="ath:AT1G35515"/>
<dbReference type="Araport" id="AT1G35515"/>
<dbReference type="TAIR" id="AT1G35515">
    <property type="gene designation" value="HOS10"/>
</dbReference>
<dbReference type="eggNOG" id="KOG0048">
    <property type="taxonomic scope" value="Eukaryota"/>
</dbReference>
<dbReference type="HOGENOM" id="CLU_028567_23_3_1"/>
<dbReference type="InParanoid" id="Q9SDS8"/>
<dbReference type="OMA" id="METSCEN"/>
<dbReference type="PhylomeDB" id="Q9SDS8"/>
<dbReference type="PRO" id="PR:Q9SDS8"/>
<dbReference type="Proteomes" id="UP000006548">
    <property type="component" value="Chromosome 1"/>
</dbReference>
<dbReference type="ExpressionAtlas" id="Q9SDS8">
    <property type="expression patterns" value="baseline and differential"/>
</dbReference>
<dbReference type="GO" id="GO:0005634">
    <property type="term" value="C:nucleus"/>
    <property type="evidence" value="ECO:0007669"/>
    <property type="project" value="UniProtKB-SubCell"/>
</dbReference>
<dbReference type="GO" id="GO:0003677">
    <property type="term" value="F:DNA binding"/>
    <property type="evidence" value="ECO:0007669"/>
    <property type="project" value="UniProtKB-KW"/>
</dbReference>
<dbReference type="CDD" id="cd00167">
    <property type="entry name" value="SANT"/>
    <property type="match status" value="2"/>
</dbReference>
<dbReference type="FunFam" id="1.10.10.60:FF:000394">
    <property type="entry name" value="MYB transcription factor"/>
    <property type="match status" value="1"/>
</dbReference>
<dbReference type="FunFam" id="1.10.10.60:FF:000121">
    <property type="entry name" value="Myb transcription factor"/>
    <property type="match status" value="1"/>
</dbReference>
<dbReference type="Gene3D" id="1.10.10.60">
    <property type="entry name" value="Homeodomain-like"/>
    <property type="match status" value="2"/>
</dbReference>
<dbReference type="InterPro" id="IPR009057">
    <property type="entry name" value="Homeodomain-like_sf"/>
</dbReference>
<dbReference type="InterPro" id="IPR017930">
    <property type="entry name" value="Myb_dom"/>
</dbReference>
<dbReference type="InterPro" id="IPR015495">
    <property type="entry name" value="Myb_TF_plants"/>
</dbReference>
<dbReference type="InterPro" id="IPR001005">
    <property type="entry name" value="SANT/Myb"/>
</dbReference>
<dbReference type="PANTHER" id="PTHR47994">
    <property type="entry name" value="F14D16.11-RELATED"/>
    <property type="match status" value="1"/>
</dbReference>
<dbReference type="PANTHER" id="PTHR47994:SF5">
    <property type="entry name" value="F14D16.11-RELATED"/>
    <property type="match status" value="1"/>
</dbReference>
<dbReference type="Pfam" id="PF00249">
    <property type="entry name" value="Myb_DNA-binding"/>
    <property type="match status" value="2"/>
</dbReference>
<dbReference type="SMART" id="SM00717">
    <property type="entry name" value="SANT"/>
    <property type="match status" value="2"/>
</dbReference>
<dbReference type="SUPFAM" id="SSF46689">
    <property type="entry name" value="Homeodomain-like"/>
    <property type="match status" value="1"/>
</dbReference>
<dbReference type="PROSITE" id="PS51294">
    <property type="entry name" value="HTH_MYB"/>
    <property type="match status" value="2"/>
</dbReference>
<organism>
    <name type="scientific">Arabidopsis thaliana</name>
    <name type="common">Mouse-ear cress</name>
    <dbReference type="NCBI Taxonomy" id="3702"/>
    <lineage>
        <taxon>Eukaryota</taxon>
        <taxon>Viridiplantae</taxon>
        <taxon>Streptophyta</taxon>
        <taxon>Embryophyta</taxon>
        <taxon>Tracheophyta</taxon>
        <taxon>Spermatophyta</taxon>
        <taxon>Magnoliopsida</taxon>
        <taxon>eudicotyledons</taxon>
        <taxon>Gunneridae</taxon>
        <taxon>Pentapetalae</taxon>
        <taxon>rosids</taxon>
        <taxon>malvids</taxon>
        <taxon>Brassicales</taxon>
        <taxon>Brassicaceae</taxon>
        <taxon>Camelineae</taxon>
        <taxon>Arabidopsis</taxon>
    </lineage>
</organism>
<gene>
    <name evidence="3" type="primary">MYB8</name>
    <name evidence="5" type="ordered locus">At1g35515</name>
    <name evidence="6" type="ORF">F15O4.43</name>
</gene>
<reference key="1">
    <citation type="journal article" date="2001" name="Curr. Opin. Plant Biol.">
        <title>The R2R3-MYB gene family in Arabidopsis thaliana.</title>
        <authorList>
            <person name="Stracke R."/>
            <person name="Werber M."/>
            <person name="Weisshaar B."/>
        </authorList>
    </citation>
    <scope>NUCLEOTIDE SEQUENCE [MRNA]</scope>
    <source>
        <strain>cv. Columbia</strain>
    </source>
</reference>
<reference key="2">
    <citation type="journal article" date="2006" name="Plant Mol. Biol.">
        <title>The MYB transcription factor superfamily of Arabidopsis: expression analysis and phylogenetic comparison with the rice MYB family.</title>
        <authorList>
            <person name="Chen Y."/>
            <person name="Yang X."/>
            <person name="He K."/>
            <person name="Liu M."/>
            <person name="Li J."/>
            <person name="Gao Z."/>
            <person name="Lin Z."/>
            <person name="Zhang Y."/>
            <person name="Wang X."/>
            <person name="Qiu X."/>
            <person name="Shen Y."/>
            <person name="Zhang L."/>
            <person name="Deng X."/>
            <person name="Luo J."/>
            <person name="Deng X.-W."/>
            <person name="Chen Z."/>
            <person name="Gu H."/>
            <person name="Qu L.-J."/>
        </authorList>
    </citation>
    <scope>NUCLEOTIDE SEQUENCE [MRNA]</scope>
    <scope>GENE FAMILY</scope>
    <scope>NOMENCLATURE</scope>
</reference>
<reference key="3">
    <citation type="journal article" date="2000" name="Nature">
        <title>Sequence and analysis of chromosome 1 of the plant Arabidopsis thaliana.</title>
        <authorList>
            <person name="Theologis A."/>
            <person name="Ecker J.R."/>
            <person name="Palm C.J."/>
            <person name="Federspiel N.A."/>
            <person name="Kaul S."/>
            <person name="White O."/>
            <person name="Alonso J."/>
            <person name="Altafi H."/>
            <person name="Araujo R."/>
            <person name="Bowman C.L."/>
            <person name="Brooks S.Y."/>
            <person name="Buehler E."/>
            <person name="Chan A."/>
            <person name="Chao Q."/>
            <person name="Chen H."/>
            <person name="Cheuk R.F."/>
            <person name="Chin C.W."/>
            <person name="Chung M.K."/>
            <person name="Conn L."/>
            <person name="Conway A.B."/>
            <person name="Conway A.R."/>
            <person name="Creasy T.H."/>
            <person name="Dewar K."/>
            <person name="Dunn P."/>
            <person name="Etgu P."/>
            <person name="Feldblyum T.V."/>
            <person name="Feng J.-D."/>
            <person name="Fong B."/>
            <person name="Fujii C.Y."/>
            <person name="Gill J.E."/>
            <person name="Goldsmith A.D."/>
            <person name="Haas B."/>
            <person name="Hansen N.F."/>
            <person name="Hughes B."/>
            <person name="Huizar L."/>
            <person name="Hunter J.L."/>
            <person name="Jenkins J."/>
            <person name="Johnson-Hopson C."/>
            <person name="Khan S."/>
            <person name="Khaykin E."/>
            <person name="Kim C.J."/>
            <person name="Koo H.L."/>
            <person name="Kremenetskaia I."/>
            <person name="Kurtz D.B."/>
            <person name="Kwan A."/>
            <person name="Lam B."/>
            <person name="Langin-Hooper S."/>
            <person name="Lee A."/>
            <person name="Lee J.M."/>
            <person name="Lenz C.A."/>
            <person name="Li J.H."/>
            <person name="Li Y.-P."/>
            <person name="Lin X."/>
            <person name="Liu S.X."/>
            <person name="Liu Z.A."/>
            <person name="Luros J.S."/>
            <person name="Maiti R."/>
            <person name="Marziali A."/>
            <person name="Militscher J."/>
            <person name="Miranda M."/>
            <person name="Nguyen M."/>
            <person name="Nierman W.C."/>
            <person name="Osborne B.I."/>
            <person name="Pai G."/>
            <person name="Peterson J."/>
            <person name="Pham P.K."/>
            <person name="Rizzo M."/>
            <person name="Rooney T."/>
            <person name="Rowley D."/>
            <person name="Sakano H."/>
            <person name="Salzberg S.L."/>
            <person name="Schwartz J.R."/>
            <person name="Shinn P."/>
            <person name="Southwick A.M."/>
            <person name="Sun H."/>
            <person name="Tallon L.J."/>
            <person name="Tambunga G."/>
            <person name="Toriumi M.J."/>
            <person name="Town C.D."/>
            <person name="Utterback T."/>
            <person name="Van Aken S."/>
            <person name="Vaysberg M."/>
            <person name="Vysotskaia V.S."/>
            <person name="Walker M."/>
            <person name="Wu D."/>
            <person name="Yu G."/>
            <person name="Fraser C.M."/>
            <person name="Venter J.C."/>
            <person name="Davis R.W."/>
        </authorList>
    </citation>
    <scope>NUCLEOTIDE SEQUENCE [LARGE SCALE GENOMIC DNA]</scope>
    <source>
        <strain>cv. Columbia</strain>
    </source>
</reference>
<reference key="4">
    <citation type="journal article" date="2017" name="Plant J.">
        <title>Araport11: a complete reannotation of the Arabidopsis thaliana reference genome.</title>
        <authorList>
            <person name="Cheng C.Y."/>
            <person name="Krishnakumar V."/>
            <person name="Chan A.P."/>
            <person name="Thibaud-Nissen F."/>
            <person name="Schobel S."/>
            <person name="Town C.D."/>
        </authorList>
    </citation>
    <scope>GENOME REANNOTATION</scope>
    <source>
        <strain>cv. Columbia</strain>
    </source>
</reference>
<reference key="5">
    <citation type="journal article" date="2005" name="Proc. Natl. Acad. Sci. U.S.A.">
        <title>HOS10 encodes an R2R3-type MYB transcription factor essential for cold acclimation in plants.</title>
        <authorList>
            <person name="Zhu J."/>
            <person name="Verslues P.E."/>
            <person name="Zheng X."/>
            <person name="Lee B.H."/>
            <person name="Zhan X."/>
            <person name="Manabe Y."/>
            <person name="Sokolchik I."/>
            <person name="Zhu Y."/>
            <person name="Dong C.H."/>
            <person name="Zhu J.K."/>
            <person name="Hasegawa P.M."/>
            <person name="Bressan R.A."/>
        </authorList>
    </citation>
    <scope>RETRACTED PAPER</scope>
</reference>
<reference key="6">
    <citation type="journal article" date="2010" name="Proc. Natl. Acad. Sci. U.S.A.">
        <title>Retraction for Zhu et al., HOS10 encodes an R2R3-type MYB transcription factor essential for cold acclimation in plants.</title>
        <authorList>
            <person name="Zhu J."/>
            <person name="Verslues P.E."/>
            <person name="Zheng X."/>
            <person name="Lee B.H."/>
            <person name="Zhan X."/>
            <person name="Manabe Y."/>
            <person name="Sokolchik I."/>
            <person name="Zhu Y."/>
            <person name="Dong C.H."/>
            <person name="Zhu J.K."/>
            <person name="Hasegawa P.M."/>
            <person name="Bressan R.A."/>
        </authorList>
    </citation>
    <scope>RETRACTION NOTICE OF PUBMED:15994234</scope>
</reference>
<accession>Q9SDS8</accession>
<accession>Q9LQE2</accession>
<protein>
    <recommendedName>
        <fullName evidence="4">Transcription factor MYB8</fullName>
    </recommendedName>
    <alternativeName>
        <fullName evidence="3">Myb-related protein 8</fullName>
        <shortName evidence="3">AtMYB8</shortName>
    </alternativeName>
</protein>
<feature type="chain" id="PRO_0000438735" description="Transcription factor MYB8">
    <location>
        <begin position="1"/>
        <end position="212"/>
    </location>
</feature>
<feature type="domain" description="HTH myb-type 1" evidence="2">
    <location>
        <begin position="9"/>
        <end position="61"/>
    </location>
</feature>
<feature type="domain" description="HTH myb-type 2" evidence="2">
    <location>
        <begin position="62"/>
        <end position="116"/>
    </location>
</feature>
<feature type="DNA-binding region" description="H-T-H motif" evidence="2">
    <location>
        <begin position="37"/>
        <end position="61"/>
    </location>
</feature>
<feature type="DNA-binding region" description="H-T-H motif" evidence="2">
    <location>
        <begin position="89"/>
        <end position="112"/>
    </location>
</feature>
<proteinExistence type="evidence at transcript level"/>
<name>MYB8_ARATH</name>
<evidence type="ECO:0000250" key="1">
    <source>
        <dbReference type="UniProtKB" id="Q38850"/>
    </source>
</evidence>
<evidence type="ECO:0000255" key="2">
    <source>
        <dbReference type="PROSITE-ProRule" id="PRU00625"/>
    </source>
</evidence>
<evidence type="ECO:0000303" key="3">
    <source>
    </source>
</evidence>
<evidence type="ECO:0000305" key="4"/>
<evidence type="ECO:0000312" key="5">
    <source>
        <dbReference type="Araport" id="AT1G35515"/>
    </source>
</evidence>
<evidence type="ECO:0000312" key="6">
    <source>
        <dbReference type="EMBL" id="AAF79367.1"/>
    </source>
</evidence>
<comment type="function">
    <text evidence="1">Transcription activator.</text>
</comment>
<comment type="subcellular location">
    <subcellularLocation>
        <location evidence="2">Nucleus</location>
    </subcellularLocation>
</comment>
<comment type="caution">
    <text evidence="4">This protein has been described as HOS10 (high expression of osmotically responsive genes 10), a coordinating factor for responses to abiotic stress and for growth and development (PubMed:15994234). However, due to a locus misidentification, the locus responsible for the HOS10 phenotypes reported in ecotype C24 remains unknown and the paper has been retracted (PubMed:20622156).</text>
</comment>
<comment type="sequence caution" evidence="4">
    <conflict type="erroneous gene model prediction">
        <sequence resource="EMBL-CDS" id="AAF79367"/>
    </conflict>
</comment>
<sequence length="212" mass="24239">MGRSPCCEKAHMNKGAWTKEEDQRLIDYIRNHGEGSWRSLPKSVGLLRCGKSCRLRWINYLRPDLKRGNFTDGEEQIIVKLHSLFGNKWSLIAGKLPGRTDNEIKNYWNTHIKRKLLNRGIDPKTHGSIIEPKTTSFHPRNEDLKSTFPGSVKLKMETSCENCASTSGTTTDEDLRLSVDCDYRYDHLDKELNLDLTLGYSPTRFVGVGSCY</sequence>
<keyword id="KW-0010">Activator</keyword>
<keyword id="KW-0238">DNA-binding</keyword>
<keyword id="KW-0539">Nucleus</keyword>
<keyword id="KW-1185">Reference proteome</keyword>
<keyword id="KW-0677">Repeat</keyword>
<keyword id="KW-0804">Transcription</keyword>
<keyword id="KW-0805">Transcription regulation</keyword>